<proteinExistence type="inferred from homology"/>
<protein>
    <recommendedName>
        <fullName>Histone H4</fullName>
    </recommendedName>
</protein>
<keyword id="KW-0007">Acetylation</keyword>
<keyword id="KW-0158">Chromosome</keyword>
<keyword id="KW-0238">DNA-binding</keyword>
<keyword id="KW-0488">Methylation</keyword>
<keyword id="KW-0544">Nucleosome core</keyword>
<keyword id="KW-0539">Nucleus</keyword>
<keyword id="KW-1185">Reference proteome</keyword>
<evidence type="ECO:0000250" key="1"/>
<evidence type="ECO:0000256" key="2">
    <source>
        <dbReference type="SAM" id="MobiDB-lite"/>
    </source>
</evidence>
<evidence type="ECO:0000305" key="3"/>
<name>H4_SOYBN</name>
<reference key="1">
    <citation type="submission" date="2009-08" db="EMBL/GenBank/DDBJ databases">
        <authorList>
            <person name="Cheung F."/>
            <person name="Xiao Y."/>
            <person name="Chan A."/>
            <person name="Moskal W."/>
            <person name="Town C.D."/>
        </authorList>
    </citation>
    <scope>NUCLEOTIDE SEQUENCE [LARGE SCALE MRNA]</scope>
</reference>
<feature type="initiator methionine" description="Removed" evidence="1">
    <location>
        <position position="1"/>
    </location>
</feature>
<feature type="chain" id="PRO_0000395967" description="Histone H4">
    <location>
        <begin position="2"/>
        <end position="103"/>
    </location>
</feature>
<feature type="DNA-binding region">
    <location>
        <begin position="17"/>
        <end position="21"/>
    </location>
</feature>
<feature type="region of interest" description="Disordered" evidence="2">
    <location>
        <begin position="1"/>
        <end position="20"/>
    </location>
</feature>
<feature type="compositionally biased region" description="Gly residues" evidence="2">
    <location>
        <begin position="1"/>
        <end position="14"/>
    </location>
</feature>
<feature type="modified residue" description="N-acetylserine" evidence="1">
    <location>
        <position position="2"/>
    </location>
</feature>
<feature type="modified residue" description="N6-acetyllysine" evidence="1">
    <location>
        <position position="6"/>
    </location>
</feature>
<feature type="modified residue" description="N6-acetyllysine" evidence="1">
    <location>
        <position position="9"/>
    </location>
</feature>
<feature type="modified residue" description="N6-acetyllysine" evidence="1">
    <location>
        <position position="13"/>
    </location>
</feature>
<feature type="modified residue" description="N6-acetyllysine" evidence="1">
    <location>
        <position position="17"/>
    </location>
</feature>
<feature type="modified residue" description="N6-acetyllysine; alternate" evidence="1">
    <location>
        <position position="21"/>
    </location>
</feature>
<feature type="modified residue" description="N6-methyllysine; alternate" evidence="1">
    <location>
        <position position="21"/>
    </location>
</feature>
<dbReference type="EMBL" id="BT095742">
    <property type="protein sequence ID" value="ACU19979.1"/>
    <property type="status" value="ALT_SEQ"/>
    <property type="molecule type" value="mRNA"/>
</dbReference>
<dbReference type="RefSeq" id="NP_001237495.1">
    <property type="nucleotide sequence ID" value="NM_001250566.2"/>
</dbReference>
<dbReference type="RefSeq" id="XP_003521335.1">
    <property type="nucleotide sequence ID" value="XM_003521287.4"/>
</dbReference>
<dbReference type="RefSeq" id="XP_003535987.1">
    <property type="nucleotide sequence ID" value="XM_003535939.5"/>
</dbReference>
<dbReference type="RefSeq" id="XP_003538030.1">
    <property type="nucleotide sequence ID" value="XM_003537982.4"/>
</dbReference>
<dbReference type="RefSeq" id="XP_003538258.1">
    <property type="nucleotide sequence ID" value="XM_003538210.5"/>
</dbReference>
<dbReference type="RefSeq" id="XP_003538259.1">
    <property type="nucleotide sequence ID" value="XM_003538211.5"/>
</dbReference>
<dbReference type="RefSeq" id="XP_003538260.1">
    <property type="nucleotide sequence ID" value="XM_003538212.5"/>
</dbReference>
<dbReference type="RefSeq" id="XP_003539748.1">
    <property type="nucleotide sequence ID" value="XM_003539700.4"/>
</dbReference>
<dbReference type="RefSeq" id="XP_003542580.3">
    <property type="nucleotide sequence ID" value="XM_003542532.5"/>
</dbReference>
<dbReference type="RefSeq" id="XP_003544868.1">
    <property type="nucleotide sequence ID" value="XM_003544820.4"/>
</dbReference>
<dbReference type="RefSeq" id="XP_003549448.1">
    <property type="nucleotide sequence ID" value="XM_003549400.4"/>
</dbReference>
<dbReference type="RefSeq" id="XP_003551292.3">
    <property type="nucleotide sequence ID" value="XM_003551244.3"/>
</dbReference>
<dbReference type="RefSeq" id="XP_003555742.1">
    <property type="nucleotide sequence ID" value="XM_003555694.5"/>
</dbReference>
<dbReference type="RefSeq" id="XP_006597302.1">
    <property type="nucleotide sequence ID" value="XM_006597239.4"/>
</dbReference>
<dbReference type="RefSeq" id="XP_014624656.1">
    <property type="nucleotide sequence ID" value="XM_014769170.3"/>
</dbReference>
<dbReference type="BMRB" id="P0CG89"/>
<dbReference type="SMR" id="P0CG89"/>
<dbReference type="FunCoup" id="P0CG89">
    <property type="interactions" value="4077"/>
</dbReference>
<dbReference type="STRING" id="3847.P0CG89"/>
<dbReference type="PaxDb" id="3847-GLYMA03G32881.1"/>
<dbReference type="EnsemblPlants" id="KRG88688">
    <property type="protein sequence ID" value="KRG88688"/>
    <property type="gene ID" value="GLYMA_U033600"/>
</dbReference>
<dbReference type="EnsemblPlants" id="KRG90333">
    <property type="protein sequence ID" value="KRG90333"/>
    <property type="gene ID" value="GLYMA_20G083800"/>
</dbReference>
<dbReference type="EnsemblPlants" id="KRG98308">
    <property type="protein sequence ID" value="KRG98308"/>
    <property type="gene ID" value="GLYMA_18G064300"/>
</dbReference>
<dbReference type="EnsemblPlants" id="KRH02870">
    <property type="protein sequence ID" value="KRH02870"/>
    <property type="gene ID" value="GLYMA_17G063200"/>
</dbReference>
<dbReference type="EnsemblPlants" id="KRH10344">
    <property type="protein sequence ID" value="KRH10344"/>
    <property type="gene ID" value="GLYMA_15G043200"/>
</dbReference>
<dbReference type="EnsemblPlants" id="KRH10345">
    <property type="protein sequence ID" value="KRH10345"/>
    <property type="gene ID" value="GLYMA_15G043200"/>
</dbReference>
<dbReference type="EnsemblPlants" id="KRH16996">
    <property type="protein sequence ID" value="KRH16996"/>
    <property type="gene ID" value="GLYMA_14G190800"/>
</dbReference>
<dbReference type="EnsemblPlants" id="KRH19969">
    <property type="protein sequence ID" value="KRH19969"/>
    <property type="gene ID" value="GLYMA_13G147000"/>
</dbReference>
<dbReference type="EnsemblPlants" id="KRH24981">
    <property type="protein sequence ID" value="KRH24981"/>
    <property type="gene ID" value="GLYMA_12G074500"/>
</dbReference>
<dbReference type="EnsemblPlants" id="KRH30344">
    <property type="protein sequence ID" value="KRH30344"/>
    <property type="gene ID" value="GLYMA_11G177800"/>
</dbReference>
<dbReference type="EnsemblPlants" id="KRH30345">
    <property type="protein sequence ID" value="KRH30345"/>
    <property type="gene ID" value="GLYMA_11G177900"/>
</dbReference>
<dbReference type="EnsemblPlants" id="KRH30347">
    <property type="protein sequence ID" value="KRH30347"/>
    <property type="gene ID" value="GLYMA_11G178100"/>
</dbReference>
<dbReference type="EnsemblPlants" id="KRH30348">
    <property type="protein sequence ID" value="KRH30348"/>
    <property type="gene ID" value="GLYMA_11G178200"/>
</dbReference>
<dbReference type="EnsemblPlants" id="KRH33582">
    <property type="protein sequence ID" value="KRH33582"/>
    <property type="gene ID" value="GLYMA_10G133500"/>
</dbReference>
<dbReference type="EnsemblPlants" id="KRH67535">
    <property type="protein sequence ID" value="KRH67535"/>
    <property type="gene ID" value="GLYMA_03G171400"/>
</dbReference>
<dbReference type="EnsemblPlants" id="KRH72633">
    <property type="protein sequence ID" value="KRH72633"/>
    <property type="gene ID" value="GLYMA_02G224100"/>
</dbReference>
<dbReference type="GeneID" id="100305586"/>
<dbReference type="GeneID" id="100777359"/>
<dbReference type="GeneID" id="100778317"/>
<dbReference type="GeneID" id="100779597"/>
<dbReference type="GeneID" id="100784085"/>
<dbReference type="GeneID" id="100784197"/>
<dbReference type="GeneID" id="100788767"/>
<dbReference type="GeneID" id="100793106"/>
<dbReference type="GeneID" id="100799680"/>
<dbReference type="GeneID" id="100800769"/>
<dbReference type="GeneID" id="100805597"/>
<dbReference type="GeneID" id="100818211"/>
<dbReference type="GeneID" id="100818748"/>
<dbReference type="GeneID" id="100819286"/>
<dbReference type="GeneID" id="100819422"/>
<dbReference type="Gramene" id="KRG88688">
    <property type="protein sequence ID" value="KRG88688"/>
    <property type="gene ID" value="GLYMA_U033600"/>
</dbReference>
<dbReference type="Gramene" id="KRG90333">
    <property type="protein sequence ID" value="KRG90333"/>
    <property type="gene ID" value="GLYMA_20G083800"/>
</dbReference>
<dbReference type="Gramene" id="KRG98308">
    <property type="protein sequence ID" value="KRG98308"/>
    <property type="gene ID" value="GLYMA_18G064300"/>
</dbReference>
<dbReference type="Gramene" id="KRH02870">
    <property type="protein sequence ID" value="KRH02870"/>
    <property type="gene ID" value="GLYMA_17G063200"/>
</dbReference>
<dbReference type="Gramene" id="KRH10344">
    <property type="protein sequence ID" value="KRH10344"/>
    <property type="gene ID" value="GLYMA_15G043200"/>
</dbReference>
<dbReference type="Gramene" id="KRH10345">
    <property type="protein sequence ID" value="KRH10345"/>
    <property type="gene ID" value="GLYMA_15G043200"/>
</dbReference>
<dbReference type="Gramene" id="KRH16996">
    <property type="protein sequence ID" value="KRH16996"/>
    <property type="gene ID" value="GLYMA_14G190800"/>
</dbReference>
<dbReference type="Gramene" id="KRH19969">
    <property type="protein sequence ID" value="KRH19969"/>
    <property type="gene ID" value="GLYMA_13G147000"/>
</dbReference>
<dbReference type="Gramene" id="KRH24981">
    <property type="protein sequence ID" value="KRH24981"/>
    <property type="gene ID" value="GLYMA_12G074500"/>
</dbReference>
<dbReference type="Gramene" id="KRH30344">
    <property type="protein sequence ID" value="KRH30344"/>
    <property type="gene ID" value="GLYMA_11G177800"/>
</dbReference>
<dbReference type="Gramene" id="KRH30345">
    <property type="protein sequence ID" value="KRH30345"/>
    <property type="gene ID" value="GLYMA_11G177900"/>
</dbReference>
<dbReference type="Gramene" id="KRH30347">
    <property type="protein sequence ID" value="KRH30347"/>
    <property type="gene ID" value="GLYMA_11G178100"/>
</dbReference>
<dbReference type="Gramene" id="KRH30348">
    <property type="protein sequence ID" value="KRH30348"/>
    <property type="gene ID" value="GLYMA_11G178200"/>
</dbReference>
<dbReference type="Gramene" id="KRH33582">
    <property type="protein sequence ID" value="KRH33582"/>
    <property type="gene ID" value="GLYMA_10G133500"/>
</dbReference>
<dbReference type="Gramene" id="KRH67535">
    <property type="protein sequence ID" value="KRH67535"/>
    <property type="gene ID" value="GLYMA_03G171400"/>
</dbReference>
<dbReference type="Gramene" id="KRH72633">
    <property type="protein sequence ID" value="KRH72633"/>
    <property type="gene ID" value="GLYMA_02G224100"/>
</dbReference>
<dbReference type="KEGG" id="gmx:100305586"/>
<dbReference type="KEGG" id="gmx:100777359"/>
<dbReference type="KEGG" id="gmx:100778317"/>
<dbReference type="KEGG" id="gmx:100779597"/>
<dbReference type="KEGG" id="gmx:100784085"/>
<dbReference type="KEGG" id="gmx:100784197"/>
<dbReference type="KEGG" id="gmx:100788767"/>
<dbReference type="KEGG" id="gmx:100793106"/>
<dbReference type="KEGG" id="gmx:100799680"/>
<dbReference type="KEGG" id="gmx:100800769"/>
<dbReference type="KEGG" id="gmx:100805597"/>
<dbReference type="KEGG" id="gmx:100818211"/>
<dbReference type="KEGG" id="gmx:100818748"/>
<dbReference type="KEGG" id="gmx:100819286"/>
<dbReference type="KEGG" id="gmx:100819422"/>
<dbReference type="eggNOG" id="KOG3467">
    <property type="taxonomic scope" value="Eukaryota"/>
</dbReference>
<dbReference type="HOGENOM" id="CLU_109117_2_3_1"/>
<dbReference type="InParanoid" id="P0CG89"/>
<dbReference type="OMA" id="FRTTIQI"/>
<dbReference type="OrthoDB" id="2532770at2759"/>
<dbReference type="Proteomes" id="UP000008827">
    <property type="component" value="Chromosome 10"/>
</dbReference>
<dbReference type="Proteomes" id="UP000008827">
    <property type="component" value="Chromosome 11"/>
</dbReference>
<dbReference type="Proteomes" id="UP000008827">
    <property type="component" value="Chromosome 12"/>
</dbReference>
<dbReference type="Proteomes" id="UP000008827">
    <property type="component" value="Chromosome 13"/>
</dbReference>
<dbReference type="Proteomes" id="UP000008827">
    <property type="component" value="Chromosome 14"/>
</dbReference>
<dbReference type="Proteomes" id="UP000008827">
    <property type="component" value="Chromosome 15"/>
</dbReference>
<dbReference type="Proteomes" id="UP000008827">
    <property type="component" value="Chromosome 17"/>
</dbReference>
<dbReference type="Proteomes" id="UP000008827">
    <property type="component" value="Chromosome 18"/>
</dbReference>
<dbReference type="Proteomes" id="UP000008827">
    <property type="component" value="Chromosome 2"/>
</dbReference>
<dbReference type="Proteomes" id="UP000008827">
    <property type="component" value="Chromosome 20"/>
</dbReference>
<dbReference type="Proteomes" id="UP000008827">
    <property type="component" value="Chromosome 3"/>
</dbReference>
<dbReference type="Proteomes" id="UP000008827">
    <property type="component" value="Unassembled WGS sequence"/>
</dbReference>
<dbReference type="GO" id="GO:0000786">
    <property type="term" value="C:nucleosome"/>
    <property type="evidence" value="ECO:0007669"/>
    <property type="project" value="UniProtKB-KW"/>
</dbReference>
<dbReference type="GO" id="GO:0005634">
    <property type="term" value="C:nucleus"/>
    <property type="evidence" value="ECO:0007669"/>
    <property type="project" value="UniProtKB-SubCell"/>
</dbReference>
<dbReference type="GO" id="GO:0003677">
    <property type="term" value="F:DNA binding"/>
    <property type="evidence" value="ECO:0000318"/>
    <property type="project" value="GO_Central"/>
</dbReference>
<dbReference type="GO" id="GO:0046982">
    <property type="term" value="F:protein heterodimerization activity"/>
    <property type="evidence" value="ECO:0007669"/>
    <property type="project" value="InterPro"/>
</dbReference>
<dbReference type="GO" id="GO:0030527">
    <property type="term" value="F:structural constituent of chromatin"/>
    <property type="evidence" value="ECO:0007669"/>
    <property type="project" value="InterPro"/>
</dbReference>
<dbReference type="GO" id="GO:0006334">
    <property type="term" value="P:nucleosome assembly"/>
    <property type="evidence" value="ECO:0000318"/>
    <property type="project" value="GO_Central"/>
</dbReference>
<dbReference type="CDD" id="cd22912">
    <property type="entry name" value="HFD_H4"/>
    <property type="match status" value="1"/>
</dbReference>
<dbReference type="FunFam" id="1.10.20.10:FF:000002">
    <property type="entry name" value="Histone H4"/>
    <property type="match status" value="1"/>
</dbReference>
<dbReference type="Gene3D" id="1.10.20.10">
    <property type="entry name" value="Histone, subunit A"/>
    <property type="match status" value="1"/>
</dbReference>
<dbReference type="InterPro" id="IPR035425">
    <property type="entry name" value="CENP-T/H4_C"/>
</dbReference>
<dbReference type="InterPro" id="IPR009072">
    <property type="entry name" value="Histone-fold"/>
</dbReference>
<dbReference type="InterPro" id="IPR001951">
    <property type="entry name" value="Histone_H4"/>
</dbReference>
<dbReference type="InterPro" id="IPR019809">
    <property type="entry name" value="Histone_H4_CS"/>
</dbReference>
<dbReference type="PANTHER" id="PTHR10484">
    <property type="entry name" value="HISTONE H4"/>
    <property type="match status" value="1"/>
</dbReference>
<dbReference type="Pfam" id="PF15511">
    <property type="entry name" value="CENP-T_C"/>
    <property type="match status" value="1"/>
</dbReference>
<dbReference type="PRINTS" id="PR00623">
    <property type="entry name" value="HISTONEH4"/>
</dbReference>
<dbReference type="SMART" id="SM00417">
    <property type="entry name" value="H4"/>
    <property type="match status" value="1"/>
</dbReference>
<dbReference type="SUPFAM" id="SSF47113">
    <property type="entry name" value="Histone-fold"/>
    <property type="match status" value="1"/>
</dbReference>
<dbReference type="PROSITE" id="PS00047">
    <property type="entry name" value="HISTONE_H4"/>
    <property type="match status" value="1"/>
</dbReference>
<comment type="function">
    <text>Core component of nucleosome. Nucleosomes wrap and compact DNA into chromatin, limiting DNA accessibility to the cellular machineries which require DNA as a template. Histones thereby play a central role in transcription regulation, DNA repair, DNA replication and chromosomal stability. DNA accessibility is regulated via a complex set of post-translational modifications of histones, also called histone code, and nucleosome remodeling.</text>
</comment>
<comment type="subunit">
    <text>The nucleosome is a histone octamer containing two molecules each of H2A, H2B, H3 and H4 assembled in one H3-H4 heterotetramer and two H2A-H2B heterodimers. The octamer wraps approximately 147 bp of DNA.</text>
</comment>
<comment type="subcellular location">
    <subcellularLocation>
        <location evidence="1">Nucleus</location>
    </subcellularLocation>
    <subcellularLocation>
        <location evidence="1">Chromosome</location>
    </subcellularLocation>
</comment>
<comment type="similarity">
    <text evidence="3">Belongs to the histone H4 family.</text>
</comment>
<comment type="sequence caution" evidence="3">
    <conflict type="miscellaneous discrepancy">
        <sequence resource="EMBL-CDS" id="ACU19979"/>
    </conflict>
    <text>Chimeric cDNA. A chimeric cDNA originating from chromosomes 19 and 20.</text>
</comment>
<organism>
    <name type="scientific">Glycine max</name>
    <name type="common">Soybean</name>
    <name type="synonym">Glycine hispida</name>
    <dbReference type="NCBI Taxonomy" id="3847"/>
    <lineage>
        <taxon>Eukaryota</taxon>
        <taxon>Viridiplantae</taxon>
        <taxon>Streptophyta</taxon>
        <taxon>Embryophyta</taxon>
        <taxon>Tracheophyta</taxon>
        <taxon>Spermatophyta</taxon>
        <taxon>Magnoliopsida</taxon>
        <taxon>eudicotyledons</taxon>
        <taxon>Gunneridae</taxon>
        <taxon>Pentapetalae</taxon>
        <taxon>rosids</taxon>
        <taxon>fabids</taxon>
        <taxon>Fabales</taxon>
        <taxon>Fabaceae</taxon>
        <taxon>Papilionoideae</taxon>
        <taxon>50 kb inversion clade</taxon>
        <taxon>NPAAA clade</taxon>
        <taxon>indigoferoid/millettioid clade</taxon>
        <taxon>Phaseoleae</taxon>
        <taxon>Glycine</taxon>
        <taxon>Glycine subgen. Soja</taxon>
    </lineage>
</organism>
<sequence length="103" mass="11409">MSGRGKGGKGLGKGGAKRHRKVLRDNIQGITKPAIRRLARRGGVKRISGLIYEETRGVLKIFLENVIRDAVTYTEHARRKTVTAMDVVYALKRQGRTLYGFGG</sequence>
<accession>P0CG89</accession>
<accession>C6TDS7</accession>